<reference key="1">
    <citation type="journal article" date="1997" name="Insect Mol. Biol.">
        <title>Identification and mRNA developmental profiles of two ultraspiracle isoforms in the epidermis and wings of Manduca sexta.</title>
        <authorList>
            <person name="Jindra M."/>
            <person name="Huang J.Y."/>
            <person name="Malone F."/>
            <person name="Asahina M."/>
            <person name="Riddiford L.M."/>
        </authorList>
    </citation>
    <scope>NUCLEOTIDE SEQUENCE [MRNA]</scope>
    <source>
        <tissue>Epidermis</tissue>
    </source>
</reference>
<keyword id="KW-0238">DNA-binding</keyword>
<keyword id="KW-0479">Metal-binding</keyword>
<keyword id="KW-0539">Nucleus</keyword>
<keyword id="KW-0675">Receptor</keyword>
<keyword id="KW-0804">Transcription</keyword>
<keyword id="KW-0805">Transcription regulation</keyword>
<keyword id="KW-0862">Zinc</keyword>
<keyword id="KW-0863">Zinc-finger</keyword>
<gene>
    <name type="primary">USP</name>
    <name type="synonym">NR2B4</name>
</gene>
<comment type="function">
    <text evidence="1">Receptor for ecdysone. May be an important modulator of insect metamorphosis (By similarity).</text>
</comment>
<comment type="subunit">
    <text evidence="1">Heterodimer of USP and ECR. Only the heterodimer is capable of high-affinity binding to ecdysone (By similarity).</text>
</comment>
<comment type="subcellular location">
    <subcellularLocation>
        <location>Nucleus</location>
    </subcellularLocation>
</comment>
<comment type="domain">
    <text>Composed of three domains: a modulating N-terminal domain, a DNA-binding domain and a C-terminal ligand-binding domain.</text>
</comment>
<comment type="similarity">
    <text evidence="5">Belongs to the nuclear hormone receptor family. NR2 subfamily.</text>
</comment>
<dbReference type="EMBL" id="U44837">
    <property type="protein sequence ID" value="AAB64234.1"/>
    <property type="molecule type" value="mRNA"/>
</dbReference>
<dbReference type="SMR" id="P54779"/>
<dbReference type="OrthoDB" id="5873264at2759"/>
<dbReference type="GO" id="GO:0005634">
    <property type="term" value="C:nucleus"/>
    <property type="evidence" value="ECO:0007669"/>
    <property type="project" value="UniProtKB-SubCell"/>
</dbReference>
<dbReference type="GO" id="GO:0003707">
    <property type="term" value="F:nuclear steroid receptor activity"/>
    <property type="evidence" value="ECO:0007669"/>
    <property type="project" value="InterPro"/>
</dbReference>
<dbReference type="GO" id="GO:0043565">
    <property type="term" value="F:sequence-specific DNA binding"/>
    <property type="evidence" value="ECO:0007669"/>
    <property type="project" value="InterPro"/>
</dbReference>
<dbReference type="GO" id="GO:0008270">
    <property type="term" value="F:zinc ion binding"/>
    <property type="evidence" value="ECO:0007669"/>
    <property type="project" value="UniProtKB-KW"/>
</dbReference>
<dbReference type="CDD" id="cd06956">
    <property type="entry name" value="NR_DBD_RXR"/>
    <property type="match status" value="1"/>
</dbReference>
<dbReference type="FunFam" id="3.30.50.10:FF:000005">
    <property type="entry name" value="Retinoic acid receptor RXR-alpha"/>
    <property type="match status" value="1"/>
</dbReference>
<dbReference type="Gene3D" id="3.30.50.10">
    <property type="entry name" value="Erythroid Transcription Factor GATA-1, subunit A"/>
    <property type="match status" value="1"/>
</dbReference>
<dbReference type="Gene3D" id="1.10.565.10">
    <property type="entry name" value="Retinoid X Receptor"/>
    <property type="match status" value="1"/>
</dbReference>
<dbReference type="InterPro" id="IPR035500">
    <property type="entry name" value="NHR-like_dom_sf"/>
</dbReference>
<dbReference type="InterPro" id="IPR000536">
    <property type="entry name" value="Nucl_hrmn_rcpt_lig-bd"/>
</dbReference>
<dbReference type="InterPro" id="IPR050274">
    <property type="entry name" value="Nuclear_hormone_rcpt_NR2"/>
</dbReference>
<dbReference type="InterPro" id="IPR001723">
    <property type="entry name" value="Nuclear_hrmn_rcpt"/>
</dbReference>
<dbReference type="InterPro" id="IPR000003">
    <property type="entry name" value="Retinoid-X_rcpt/HNF4"/>
</dbReference>
<dbReference type="InterPro" id="IPR001628">
    <property type="entry name" value="Znf_hrmn_rcpt"/>
</dbReference>
<dbReference type="InterPro" id="IPR013088">
    <property type="entry name" value="Znf_NHR/GATA"/>
</dbReference>
<dbReference type="PANTHER" id="PTHR24083">
    <property type="entry name" value="NUCLEAR HORMONE RECEPTOR"/>
    <property type="match status" value="1"/>
</dbReference>
<dbReference type="Pfam" id="PF00104">
    <property type="entry name" value="Hormone_recep"/>
    <property type="match status" value="1"/>
</dbReference>
<dbReference type="Pfam" id="PF00105">
    <property type="entry name" value="zf-C4"/>
    <property type="match status" value="1"/>
</dbReference>
<dbReference type="PRINTS" id="PR00545">
    <property type="entry name" value="RETINOIDXR"/>
</dbReference>
<dbReference type="PRINTS" id="PR00398">
    <property type="entry name" value="STRDHORMONER"/>
</dbReference>
<dbReference type="PRINTS" id="PR00047">
    <property type="entry name" value="STROIDFINGER"/>
</dbReference>
<dbReference type="SMART" id="SM00430">
    <property type="entry name" value="HOLI"/>
    <property type="match status" value="1"/>
</dbReference>
<dbReference type="SMART" id="SM00399">
    <property type="entry name" value="ZnF_C4"/>
    <property type="match status" value="1"/>
</dbReference>
<dbReference type="SUPFAM" id="SSF57716">
    <property type="entry name" value="Glucocorticoid receptor-like (DNA-binding domain)"/>
    <property type="match status" value="1"/>
</dbReference>
<dbReference type="SUPFAM" id="SSF48508">
    <property type="entry name" value="Nuclear receptor ligand-binding domain"/>
    <property type="match status" value="1"/>
</dbReference>
<dbReference type="PROSITE" id="PS51843">
    <property type="entry name" value="NR_LBD"/>
    <property type="match status" value="1"/>
</dbReference>
<dbReference type="PROSITE" id="PS00031">
    <property type="entry name" value="NUCLEAR_REC_DBD_1"/>
    <property type="match status" value="1"/>
</dbReference>
<dbReference type="PROSITE" id="PS51030">
    <property type="entry name" value="NUCLEAR_REC_DBD_2"/>
    <property type="match status" value="1"/>
</dbReference>
<sequence>MSSVAKKDKRTMSVTALINRAWPLTPAPHQQQSMPSSQPSNFLQPLATPSTTPSVELDIQWLNIEPGFMSPMSPPEMKPDTAMLDGLRDDSTPPPAFKNYPPNHPLSGSKHLCSICGDRASGKHYGVYSCEGCKGFFKRTVRKDLTYACREDRNCIIDKRQRNRCQYCRYQKCLACGMKREAVQEERQRAARGTEDAHPSSSVQELSIERLLEIESLVADPPEEFQFLRVGPESGVPAKYRAPVSSLCQIGNKQIAALVVWARDIPHFGQLELEDQILLIKNSWNELLLFAIAWRSMEYLTDERENVDSRSTAPPQLMCLMPGMTLHRNSALQAGVGQIFDRVLSELSLKMRTLRMDQAEYVALKAIILLNPDVKGLKNKPEVVVLREKMFSCLDEYVRRSRCAEEGRFAALLLRLPALRSISLKCFEHLYFFHLVADTSIASYIHDALRNHAPSIDTSIL</sequence>
<evidence type="ECO:0000250" key="1"/>
<evidence type="ECO:0000255" key="2">
    <source>
        <dbReference type="PROSITE-ProRule" id="PRU00407"/>
    </source>
</evidence>
<evidence type="ECO:0000255" key="3">
    <source>
        <dbReference type="PROSITE-ProRule" id="PRU01189"/>
    </source>
</evidence>
<evidence type="ECO:0000256" key="4">
    <source>
        <dbReference type="SAM" id="MobiDB-lite"/>
    </source>
</evidence>
<evidence type="ECO:0000305" key="5"/>
<organism>
    <name type="scientific">Manduca sexta</name>
    <name type="common">Tobacco hawkmoth</name>
    <name type="synonym">Tobacco hornworm</name>
    <dbReference type="NCBI Taxonomy" id="7130"/>
    <lineage>
        <taxon>Eukaryota</taxon>
        <taxon>Metazoa</taxon>
        <taxon>Ecdysozoa</taxon>
        <taxon>Arthropoda</taxon>
        <taxon>Hexapoda</taxon>
        <taxon>Insecta</taxon>
        <taxon>Pterygota</taxon>
        <taxon>Neoptera</taxon>
        <taxon>Endopterygota</taxon>
        <taxon>Lepidoptera</taxon>
        <taxon>Glossata</taxon>
        <taxon>Ditrysia</taxon>
        <taxon>Bombycoidea</taxon>
        <taxon>Sphingidae</taxon>
        <taxon>Sphinginae</taxon>
        <taxon>Sphingini</taxon>
        <taxon>Manduca</taxon>
    </lineage>
</organism>
<protein>
    <recommendedName>
        <fullName>Protein ultraspiracle homolog</fullName>
    </recommendedName>
    <alternativeName>
        <fullName>Nuclear receptor subfamily 2 group B member 4</fullName>
    </alternativeName>
</protein>
<feature type="chain" id="PRO_0000053584" description="Protein ultraspiracle homolog">
    <location>
        <begin position="1"/>
        <end position="461"/>
    </location>
</feature>
<feature type="domain" description="NR LBD" evidence="3">
    <location>
        <begin position="203"/>
        <end position="452"/>
    </location>
</feature>
<feature type="DNA-binding region" description="Nuclear receptor" evidence="2">
    <location>
        <begin position="113"/>
        <end position="185"/>
    </location>
</feature>
<feature type="zinc finger region" description="NR C4-type" evidence="2">
    <location>
        <begin position="113"/>
        <end position="133"/>
    </location>
</feature>
<feature type="zinc finger region" description="NR C4-type" evidence="2">
    <location>
        <begin position="149"/>
        <end position="173"/>
    </location>
</feature>
<feature type="region of interest" description="Modulating" evidence="1">
    <location>
        <begin position="1"/>
        <end position="112"/>
    </location>
</feature>
<feature type="region of interest" description="Disordered" evidence="4">
    <location>
        <begin position="26"/>
        <end position="51"/>
    </location>
</feature>
<feature type="region of interest" description="Hinge">
    <location>
        <begin position="185"/>
        <end position="192"/>
    </location>
</feature>
<feature type="compositionally biased region" description="Low complexity" evidence="4">
    <location>
        <begin position="27"/>
        <end position="40"/>
    </location>
</feature>
<feature type="compositionally biased region" description="Polar residues" evidence="4">
    <location>
        <begin position="41"/>
        <end position="51"/>
    </location>
</feature>
<proteinExistence type="evidence at transcript level"/>
<accession>P54779</accession>
<name>USP_MANSE</name>